<dbReference type="EMBL" id="CP000086">
    <property type="protein sequence ID" value="ABC37141.1"/>
    <property type="molecule type" value="Genomic_DNA"/>
</dbReference>
<dbReference type="RefSeq" id="WP_009910302.1">
    <property type="nucleotide sequence ID" value="NZ_CP008785.1"/>
</dbReference>
<dbReference type="SMR" id="Q2STD7"/>
<dbReference type="GeneID" id="45122989"/>
<dbReference type="KEGG" id="bte:BTH_I3320"/>
<dbReference type="HOGENOM" id="CLU_007831_2_2_4"/>
<dbReference type="Proteomes" id="UP000001930">
    <property type="component" value="Chromosome I"/>
</dbReference>
<dbReference type="GO" id="GO:0005829">
    <property type="term" value="C:cytosol"/>
    <property type="evidence" value="ECO:0007669"/>
    <property type="project" value="TreeGrafter"/>
</dbReference>
<dbReference type="GO" id="GO:0050660">
    <property type="term" value="F:flavin adenine dinucleotide binding"/>
    <property type="evidence" value="ECO:0007669"/>
    <property type="project" value="UniProtKB-UniRule"/>
</dbReference>
<dbReference type="GO" id="GO:0030488">
    <property type="term" value="P:tRNA methylation"/>
    <property type="evidence" value="ECO:0007669"/>
    <property type="project" value="TreeGrafter"/>
</dbReference>
<dbReference type="GO" id="GO:0002098">
    <property type="term" value="P:tRNA wobble uridine modification"/>
    <property type="evidence" value="ECO:0007669"/>
    <property type="project" value="InterPro"/>
</dbReference>
<dbReference type="FunFam" id="1.10.10.1800:FF:000001">
    <property type="entry name" value="tRNA uridine 5-carboxymethylaminomethyl modification enzyme MnmG"/>
    <property type="match status" value="1"/>
</dbReference>
<dbReference type="FunFam" id="1.10.150.570:FF:000001">
    <property type="entry name" value="tRNA uridine 5-carboxymethylaminomethyl modification enzyme MnmG"/>
    <property type="match status" value="1"/>
</dbReference>
<dbReference type="FunFam" id="3.50.50.60:FF:000002">
    <property type="entry name" value="tRNA uridine 5-carboxymethylaminomethyl modification enzyme MnmG"/>
    <property type="match status" value="1"/>
</dbReference>
<dbReference type="FunFam" id="3.50.50.60:FF:000010">
    <property type="entry name" value="tRNA uridine 5-carboxymethylaminomethyl modification enzyme MnmG"/>
    <property type="match status" value="1"/>
</dbReference>
<dbReference type="Gene3D" id="3.50.50.60">
    <property type="entry name" value="FAD/NAD(P)-binding domain"/>
    <property type="match status" value="2"/>
</dbReference>
<dbReference type="Gene3D" id="1.10.150.570">
    <property type="entry name" value="GidA associated domain, C-terminal subdomain"/>
    <property type="match status" value="1"/>
</dbReference>
<dbReference type="Gene3D" id="1.10.10.1800">
    <property type="entry name" value="tRNA uridine 5-carboxymethylaminomethyl modification enzyme MnmG/GidA"/>
    <property type="match status" value="1"/>
</dbReference>
<dbReference type="HAMAP" id="MF_00129">
    <property type="entry name" value="MnmG_GidA"/>
    <property type="match status" value="1"/>
</dbReference>
<dbReference type="InterPro" id="IPR036188">
    <property type="entry name" value="FAD/NAD-bd_sf"/>
</dbReference>
<dbReference type="InterPro" id="IPR049312">
    <property type="entry name" value="GIDA_C_N"/>
</dbReference>
<dbReference type="InterPro" id="IPR004416">
    <property type="entry name" value="MnmG"/>
</dbReference>
<dbReference type="InterPro" id="IPR002218">
    <property type="entry name" value="MnmG-rel"/>
</dbReference>
<dbReference type="InterPro" id="IPR020595">
    <property type="entry name" value="MnmG-rel_CS"/>
</dbReference>
<dbReference type="InterPro" id="IPR026904">
    <property type="entry name" value="MnmG_C"/>
</dbReference>
<dbReference type="InterPro" id="IPR047001">
    <property type="entry name" value="MnmG_C_subdom"/>
</dbReference>
<dbReference type="InterPro" id="IPR044920">
    <property type="entry name" value="MnmG_C_subdom_sf"/>
</dbReference>
<dbReference type="InterPro" id="IPR040131">
    <property type="entry name" value="MnmG_N"/>
</dbReference>
<dbReference type="NCBIfam" id="TIGR00136">
    <property type="entry name" value="mnmG_gidA"/>
    <property type="match status" value="1"/>
</dbReference>
<dbReference type="PANTHER" id="PTHR11806">
    <property type="entry name" value="GLUCOSE INHIBITED DIVISION PROTEIN A"/>
    <property type="match status" value="1"/>
</dbReference>
<dbReference type="PANTHER" id="PTHR11806:SF0">
    <property type="entry name" value="PROTEIN MTO1 HOMOLOG, MITOCHONDRIAL"/>
    <property type="match status" value="1"/>
</dbReference>
<dbReference type="Pfam" id="PF01134">
    <property type="entry name" value="GIDA"/>
    <property type="match status" value="1"/>
</dbReference>
<dbReference type="Pfam" id="PF21680">
    <property type="entry name" value="GIDA_C_1st"/>
    <property type="match status" value="1"/>
</dbReference>
<dbReference type="Pfam" id="PF13932">
    <property type="entry name" value="SAM_GIDA_C"/>
    <property type="match status" value="1"/>
</dbReference>
<dbReference type="SMART" id="SM01228">
    <property type="entry name" value="GIDA_assoc_3"/>
    <property type="match status" value="1"/>
</dbReference>
<dbReference type="SUPFAM" id="SSF51905">
    <property type="entry name" value="FAD/NAD(P)-binding domain"/>
    <property type="match status" value="1"/>
</dbReference>
<dbReference type="PROSITE" id="PS01280">
    <property type="entry name" value="GIDA_1"/>
    <property type="match status" value="1"/>
</dbReference>
<dbReference type="PROSITE" id="PS01281">
    <property type="entry name" value="GIDA_2"/>
    <property type="match status" value="1"/>
</dbReference>
<comment type="function">
    <text evidence="1">NAD-binding protein involved in the addition of a carboxymethylaminomethyl (cmnm) group at the wobble position (U34) of certain tRNAs, forming tRNA-cmnm(5)s(2)U34.</text>
</comment>
<comment type="cofactor">
    <cofactor evidence="1">
        <name>FAD</name>
        <dbReference type="ChEBI" id="CHEBI:57692"/>
    </cofactor>
</comment>
<comment type="subunit">
    <text evidence="1">Homodimer. Heterotetramer of two MnmE and two MnmG subunits.</text>
</comment>
<comment type="subcellular location">
    <subcellularLocation>
        <location evidence="1">Cytoplasm</location>
    </subcellularLocation>
</comment>
<comment type="similarity">
    <text evidence="1">Belongs to the MnmG family.</text>
</comment>
<name>MNMG_BURTA</name>
<gene>
    <name evidence="1" type="primary">mnmG</name>
    <name evidence="1" type="synonym">gidA</name>
    <name type="ordered locus">BTH_I3320</name>
</gene>
<protein>
    <recommendedName>
        <fullName evidence="1">tRNA uridine 5-carboxymethylaminomethyl modification enzyme MnmG</fullName>
    </recommendedName>
    <alternativeName>
        <fullName evidence="1">Glucose-inhibited division protein A</fullName>
    </alternativeName>
</protein>
<sequence>MLYPIEFDVIVVGGGHAGTEAALASARMGAKTLLLTHNIETLGQMSCNPSIGGIGKGHLVKEVDALGGAMAAATDEGGIQFRILNSSKGPAVRATRAQADRVLYKQAIRRYLENQPNLWLFQQAVDDLMVEGDRVVGAVTQVGVRFRARAVVLTAGTFLDGKIHVGLNNYTGGRAGDPAAVSLSSRLKELKLPQGRLKTGTPPRIDGRTIDFSKLEEQPGDLDPVPVFSFLGRPEQHPEQLPCWVTHTNERTHDIIRSGLDRSPMYTGVIEGVGPRYCPSIEDKIHRFASKDSHQIFLEPEGLTTNEFYPNGISTSLPFDVQLALVHSMRGLEQAHILRPGYAIEYDYFDPRALKSSLETKAINGLFFAGQINGTTGYEEAAAQGLLAGINAGRHALEKEAWCPRRDQAYLGVLVDDLVTRGVSEPYRMFTSRAEYRLSLREDNADMRLTEIGRELGVVDDVRWDAFNRKRDAVSRETERLRTTWVTPKTLPADEATELLGKPIDHEYSLAELLRRPGISYDGVCGLRGGECGPSEPLAEDALLLAQIKEQIEIGIKYQGYIERQAGEIERNGANENTRLPDGIDYTEVRGLSFEVSQKLNQFRPETIGQASRISGVTPAAISLLMVHLKKRGLGRRKGADSAPGADAETNSAATQQ</sequence>
<accession>Q2STD7</accession>
<evidence type="ECO:0000255" key="1">
    <source>
        <dbReference type="HAMAP-Rule" id="MF_00129"/>
    </source>
</evidence>
<evidence type="ECO:0000256" key="2">
    <source>
        <dbReference type="SAM" id="MobiDB-lite"/>
    </source>
</evidence>
<reference key="1">
    <citation type="journal article" date="2005" name="BMC Genomics">
        <title>Bacterial genome adaptation to niches: divergence of the potential virulence genes in three Burkholderia species of different survival strategies.</title>
        <authorList>
            <person name="Kim H.S."/>
            <person name="Schell M.A."/>
            <person name="Yu Y."/>
            <person name="Ulrich R.L."/>
            <person name="Sarria S.H."/>
            <person name="Nierman W.C."/>
            <person name="DeShazer D."/>
        </authorList>
    </citation>
    <scope>NUCLEOTIDE SEQUENCE [LARGE SCALE GENOMIC DNA]</scope>
    <source>
        <strain>ATCC 700388 / DSM 13276 / CCUG 48851 / CIP 106301 / E264</strain>
    </source>
</reference>
<organism>
    <name type="scientific">Burkholderia thailandensis (strain ATCC 700388 / DSM 13276 / CCUG 48851 / CIP 106301 / E264)</name>
    <dbReference type="NCBI Taxonomy" id="271848"/>
    <lineage>
        <taxon>Bacteria</taxon>
        <taxon>Pseudomonadati</taxon>
        <taxon>Pseudomonadota</taxon>
        <taxon>Betaproteobacteria</taxon>
        <taxon>Burkholderiales</taxon>
        <taxon>Burkholderiaceae</taxon>
        <taxon>Burkholderia</taxon>
        <taxon>pseudomallei group</taxon>
    </lineage>
</organism>
<keyword id="KW-0963">Cytoplasm</keyword>
<keyword id="KW-0274">FAD</keyword>
<keyword id="KW-0285">Flavoprotein</keyword>
<keyword id="KW-0520">NAD</keyword>
<keyword id="KW-0819">tRNA processing</keyword>
<proteinExistence type="inferred from homology"/>
<feature type="chain" id="PRO_1000016570" description="tRNA uridine 5-carboxymethylaminomethyl modification enzyme MnmG">
    <location>
        <begin position="1"/>
        <end position="657"/>
    </location>
</feature>
<feature type="region of interest" description="Disordered" evidence="2">
    <location>
        <begin position="635"/>
        <end position="657"/>
    </location>
</feature>
<feature type="binding site" evidence="1">
    <location>
        <begin position="13"/>
        <end position="18"/>
    </location>
    <ligand>
        <name>FAD</name>
        <dbReference type="ChEBI" id="CHEBI:57692"/>
    </ligand>
</feature>
<feature type="binding site" evidence="1">
    <location>
        <begin position="274"/>
        <end position="288"/>
    </location>
    <ligand>
        <name>NAD(+)</name>
        <dbReference type="ChEBI" id="CHEBI:57540"/>
    </ligand>
</feature>